<comment type="function">
    <text evidence="1">Catalyzes the formation of phosphatidylethanolamine (PtdEtn) from phosphatidylserine (PtdSer).</text>
</comment>
<comment type="catalytic activity">
    <reaction evidence="1">
        <text>a 1,2-diacyl-sn-glycero-3-phospho-L-serine + H(+) = a 1,2-diacyl-sn-glycero-3-phosphoethanolamine + CO2</text>
        <dbReference type="Rhea" id="RHEA:20828"/>
        <dbReference type="ChEBI" id="CHEBI:15378"/>
        <dbReference type="ChEBI" id="CHEBI:16526"/>
        <dbReference type="ChEBI" id="CHEBI:57262"/>
        <dbReference type="ChEBI" id="CHEBI:64612"/>
        <dbReference type="EC" id="4.1.1.65"/>
    </reaction>
</comment>
<comment type="cofactor">
    <cofactor evidence="1">
        <name>pyruvate</name>
        <dbReference type="ChEBI" id="CHEBI:15361"/>
    </cofactor>
    <text evidence="1">Binds 1 pyruvoyl group covalently per subunit.</text>
</comment>
<comment type="pathway">
    <text evidence="1">Phospholipid metabolism; phosphatidylethanolamine biosynthesis; phosphatidylethanolamine from CDP-diacylglycerol: step 2/2.</text>
</comment>
<comment type="subunit">
    <text evidence="1">Heterodimer of a large membrane-associated beta subunit and a small pyruvoyl-containing alpha subunit.</text>
</comment>
<comment type="subcellular location">
    <subcellularLocation>
        <location evidence="1">Cell membrane</location>
        <topology evidence="1">Peripheral membrane protein</topology>
    </subcellularLocation>
</comment>
<comment type="PTM">
    <text evidence="1">Is synthesized initially as an inactive proenzyme. Formation of the active enzyme involves a self-maturation process in which the active site pyruvoyl group is generated from an internal serine residue via an autocatalytic post-translational modification. Two non-identical subunits are generated from the proenzyme in this reaction, and the pyruvate is formed at the N-terminus of the alpha chain, which is derived from the carboxyl end of the proenzyme. The post-translation cleavage follows an unusual pathway, termed non-hydrolytic serinolysis, in which the side chain hydroxyl group of the serine supplies its oxygen atom to form the C-terminus of the beta chain, while the remainder of the serine residue undergoes an oxidative deamination to produce ammonia and the pyruvoyl prosthetic group on the alpha chain.</text>
</comment>
<comment type="similarity">
    <text evidence="1">Belongs to the phosphatidylserine decarboxylase family. PSD-A subfamily.</text>
</comment>
<reference key="1">
    <citation type="journal article" date="2007" name="J. Bacteriol.">
        <title>Genome sequence and analysis of the soil cellulolytic actinomycete Thermobifida fusca YX.</title>
        <authorList>
            <person name="Lykidis A."/>
            <person name="Mavromatis K."/>
            <person name="Ivanova N."/>
            <person name="Anderson I."/>
            <person name="Land M."/>
            <person name="DiBartolo G."/>
            <person name="Martinez M."/>
            <person name="Lapidus A."/>
            <person name="Lucas S."/>
            <person name="Copeland A."/>
            <person name="Richardson P."/>
            <person name="Wilson D.B."/>
            <person name="Kyrpides N."/>
        </authorList>
    </citation>
    <scope>NUCLEOTIDE SEQUENCE [LARGE SCALE GENOMIC DNA]</scope>
    <source>
        <strain>YX</strain>
    </source>
</reference>
<sequence length="217" mass="23407">MTPKRHPAGPRRLVPRMARGSAPWLLPAFTAAGLAVLTSRGSRTRKALAVPVVALAAGMAWFFRDPDRGPASGRFLSAADGVVQSVDPLPDGRTRIAVFMNPLNVHVNRAPIAGVVTGVEHRPGGFLPAFDKDSERNERVIWTFDTEVGEVTVIQIAGAMVRRIVPYHPVGAKVEQGERIGLIRFGSRVDVYLPPGIAPAVEVGQKVRAGETRLDRD</sequence>
<evidence type="ECO:0000255" key="1">
    <source>
        <dbReference type="HAMAP-Rule" id="MF_00664"/>
    </source>
</evidence>
<gene>
    <name evidence="1" type="primary">psd</name>
    <name type="ordered locus">Tfu_1894</name>
</gene>
<name>PSD_THEFY</name>
<proteinExistence type="inferred from homology"/>
<keyword id="KW-1003">Cell membrane</keyword>
<keyword id="KW-0210">Decarboxylase</keyword>
<keyword id="KW-0444">Lipid biosynthesis</keyword>
<keyword id="KW-0443">Lipid metabolism</keyword>
<keyword id="KW-0456">Lyase</keyword>
<keyword id="KW-0472">Membrane</keyword>
<keyword id="KW-0594">Phospholipid biosynthesis</keyword>
<keyword id="KW-1208">Phospholipid metabolism</keyword>
<keyword id="KW-0670">Pyruvate</keyword>
<keyword id="KW-0865">Zymogen</keyword>
<organism>
    <name type="scientific">Thermobifida fusca (strain YX)</name>
    <dbReference type="NCBI Taxonomy" id="269800"/>
    <lineage>
        <taxon>Bacteria</taxon>
        <taxon>Bacillati</taxon>
        <taxon>Actinomycetota</taxon>
        <taxon>Actinomycetes</taxon>
        <taxon>Streptosporangiales</taxon>
        <taxon>Nocardiopsidaceae</taxon>
        <taxon>Thermobifida</taxon>
    </lineage>
</organism>
<accession>Q47NP2</accession>
<feature type="chain" id="PRO_0000262277" description="Phosphatidylserine decarboxylase beta chain" evidence="1">
    <location>
        <begin position="1"/>
        <end position="186"/>
    </location>
</feature>
<feature type="chain" id="PRO_0000262278" description="Phosphatidylserine decarboxylase alpha chain" evidence="1">
    <location>
        <begin position="187"/>
        <end position="217"/>
    </location>
</feature>
<feature type="active site" description="Schiff-base intermediate with substrate; via pyruvic acid" evidence="1">
    <location>
        <position position="187"/>
    </location>
</feature>
<feature type="site" description="Cleavage (non-hydrolytic); by autocatalysis" evidence="1">
    <location>
        <begin position="186"/>
        <end position="187"/>
    </location>
</feature>
<feature type="modified residue" description="Pyruvic acid (Ser); by autocatalysis" evidence="1">
    <location>
        <position position="187"/>
    </location>
</feature>
<dbReference type="EC" id="4.1.1.65" evidence="1"/>
<dbReference type="EMBL" id="CP000088">
    <property type="protein sequence ID" value="AAZ55927.1"/>
    <property type="molecule type" value="Genomic_DNA"/>
</dbReference>
<dbReference type="RefSeq" id="WP_011292318.1">
    <property type="nucleotide sequence ID" value="NC_007333.1"/>
</dbReference>
<dbReference type="SMR" id="Q47NP2"/>
<dbReference type="STRING" id="269800.Tfu_1894"/>
<dbReference type="KEGG" id="tfu:Tfu_1894"/>
<dbReference type="eggNOG" id="COG0688">
    <property type="taxonomic scope" value="Bacteria"/>
</dbReference>
<dbReference type="HOGENOM" id="CLU_072492_1_0_11"/>
<dbReference type="OrthoDB" id="9790893at2"/>
<dbReference type="UniPathway" id="UPA00558">
    <property type="reaction ID" value="UER00616"/>
</dbReference>
<dbReference type="GO" id="GO:0005886">
    <property type="term" value="C:plasma membrane"/>
    <property type="evidence" value="ECO:0007669"/>
    <property type="project" value="UniProtKB-SubCell"/>
</dbReference>
<dbReference type="GO" id="GO:0004609">
    <property type="term" value="F:phosphatidylserine decarboxylase activity"/>
    <property type="evidence" value="ECO:0007669"/>
    <property type="project" value="UniProtKB-UniRule"/>
</dbReference>
<dbReference type="GO" id="GO:0006646">
    <property type="term" value="P:phosphatidylethanolamine biosynthetic process"/>
    <property type="evidence" value="ECO:0007669"/>
    <property type="project" value="UniProtKB-UniRule"/>
</dbReference>
<dbReference type="HAMAP" id="MF_00664">
    <property type="entry name" value="PS_decarb_PSD_A"/>
    <property type="match status" value="1"/>
</dbReference>
<dbReference type="InterPro" id="IPR003817">
    <property type="entry name" value="PS_Dcarbxylase"/>
</dbReference>
<dbReference type="InterPro" id="IPR033175">
    <property type="entry name" value="PSD-A"/>
</dbReference>
<dbReference type="NCBIfam" id="NF003683">
    <property type="entry name" value="PRK05305.2-3"/>
    <property type="match status" value="1"/>
</dbReference>
<dbReference type="NCBIfam" id="NF003685">
    <property type="entry name" value="PRK05305.2-5"/>
    <property type="match status" value="1"/>
</dbReference>
<dbReference type="PANTHER" id="PTHR35809">
    <property type="entry name" value="ARCHAETIDYLSERINE DECARBOXYLASE PROENZYME-RELATED"/>
    <property type="match status" value="1"/>
</dbReference>
<dbReference type="PANTHER" id="PTHR35809:SF1">
    <property type="entry name" value="ARCHAETIDYLSERINE DECARBOXYLASE PROENZYME-RELATED"/>
    <property type="match status" value="1"/>
</dbReference>
<dbReference type="Pfam" id="PF02666">
    <property type="entry name" value="PS_Dcarbxylase"/>
    <property type="match status" value="1"/>
</dbReference>
<protein>
    <recommendedName>
        <fullName evidence="1">Phosphatidylserine decarboxylase proenzyme</fullName>
        <ecNumber evidence="1">4.1.1.65</ecNumber>
    </recommendedName>
    <component>
        <recommendedName>
            <fullName evidence="1">Phosphatidylserine decarboxylase alpha chain</fullName>
        </recommendedName>
    </component>
    <component>
        <recommendedName>
            <fullName evidence="1">Phosphatidylserine decarboxylase beta chain</fullName>
        </recommendedName>
    </component>
</protein>